<evidence type="ECO:0000305" key="1"/>
<proteinExistence type="predicted"/>
<name>ACOX_CUPNH</name>
<comment type="function">
    <text>Essential for acetoin catabolism.</text>
</comment>
<comment type="pathway">
    <text>Ketone degradation; acetoin degradation.</text>
</comment>
<comment type="subcellular location">
    <subcellularLocation>
        <location evidence="1">Cell membrane</location>
    </subcellularLocation>
</comment>
<reference key="1">
    <citation type="journal article" date="1991" name="J. Bacteriol.">
        <title>Identification and molecular characterization of the Alcaligenes eutrophus H16 aco operon genes involved in acetoin catabolism.</title>
        <authorList>
            <person name="Priefert H."/>
            <person name="Hein S."/>
            <person name="Krueger N."/>
            <person name="Zeh K."/>
            <person name="Schmidt B."/>
            <person name="Steinbuechel A."/>
        </authorList>
    </citation>
    <scope>NUCLEOTIDE SEQUENCE [GENOMIC DNA]</scope>
</reference>
<reference key="2">
    <citation type="journal article" date="2006" name="Nat. Biotechnol.">
        <title>Genome sequence of the bioplastic-producing 'Knallgas' bacterium Ralstonia eutropha H16.</title>
        <authorList>
            <person name="Pohlmann A."/>
            <person name="Fricke W.F."/>
            <person name="Reinecke F."/>
            <person name="Kusian B."/>
            <person name="Liesegang H."/>
            <person name="Cramm R."/>
            <person name="Eitinger T."/>
            <person name="Ewering C."/>
            <person name="Poetter M."/>
            <person name="Schwartz E."/>
            <person name="Strittmatter A."/>
            <person name="Voss I."/>
            <person name="Gottschalk G."/>
            <person name="Steinbuechel A."/>
            <person name="Friedrich B."/>
            <person name="Bowien B."/>
        </authorList>
    </citation>
    <scope>NUCLEOTIDE SEQUENCE [LARGE SCALE GENOMIC DNA]</scope>
    <source>
        <strain>ATCC 17699 / DSM 428 / KCTC 22496 / NCIMB 10442 / H16 / Stanier 337</strain>
    </source>
</reference>
<sequence length="359" mass="37949">MGHAAGASAQIAPVVGIIANPISARDIRRVIANANSLQLADRVNIVLRLLAALASCGVERVLMMPDREGLRVMLARHLARRQGPDSGLPAVDYLDMPVTARVDDTLRAARCMADAGVAAIIVLGGDGTHRAVVRECGAVPIAGLSTGTNNAYPEMREPTIIGLATGLYATGRIPPAQALASNKRLDIVIRDGNGGFRRDIALVDAVISHEHFIGARALWKTDTLAAVYVSFADPEAIGLSSIAGLLEPVGRREEGGLAIELAAPGEGEFDLCAPIAPGLMCTVPVAGWQRLEHGRPHRVRQRSGIVALDGERELAFGPDDEVTVTLHDHAFRSIDVAACMRHAGRHHLMRSLPQPAAVG</sequence>
<gene>
    <name type="primary">acoX</name>
    <name type="ordered locus">H16_B0143</name>
</gene>
<accession>P27748</accession>
<accession>Q0K4X5</accession>
<keyword id="KW-0006">Acetoin catabolism</keyword>
<keyword id="KW-1003">Cell membrane</keyword>
<keyword id="KW-0472">Membrane</keyword>
<keyword id="KW-1185">Reference proteome</keyword>
<dbReference type="EMBL" id="M66060">
    <property type="protein sequence ID" value="AAA21947.1"/>
    <property type="molecule type" value="Genomic_DNA"/>
</dbReference>
<dbReference type="EMBL" id="AM260480">
    <property type="protein sequence ID" value="CAJ94949.1"/>
    <property type="molecule type" value="Genomic_DNA"/>
</dbReference>
<dbReference type="RefSeq" id="WP_011616378.1">
    <property type="nucleotide sequence ID" value="NC_008314.1"/>
</dbReference>
<dbReference type="STRING" id="381666.H16_B0143"/>
<dbReference type="KEGG" id="reh:H16_B0143"/>
<dbReference type="eggNOG" id="COG3199">
    <property type="taxonomic scope" value="Bacteria"/>
</dbReference>
<dbReference type="HOGENOM" id="CLU_786821_0_0_4"/>
<dbReference type="OrthoDB" id="4292700at2"/>
<dbReference type="UniPathway" id="UPA00040"/>
<dbReference type="Proteomes" id="UP000008210">
    <property type="component" value="Chromosome 2"/>
</dbReference>
<dbReference type="GO" id="GO:0005886">
    <property type="term" value="C:plasma membrane"/>
    <property type="evidence" value="ECO:0007669"/>
    <property type="project" value="UniProtKB-SubCell"/>
</dbReference>
<dbReference type="GO" id="GO:0005524">
    <property type="term" value="F:ATP binding"/>
    <property type="evidence" value="ECO:0007669"/>
    <property type="project" value="UniProtKB-ARBA"/>
</dbReference>
<dbReference type="GO" id="GO:0051287">
    <property type="term" value="F:NAD binding"/>
    <property type="evidence" value="ECO:0007669"/>
    <property type="project" value="UniProtKB-ARBA"/>
</dbReference>
<dbReference type="GO" id="GO:0003951">
    <property type="term" value="F:NAD+ kinase activity"/>
    <property type="evidence" value="ECO:0007669"/>
    <property type="project" value="InterPro"/>
</dbReference>
<dbReference type="GO" id="GO:0045150">
    <property type="term" value="P:acetoin catabolic process"/>
    <property type="evidence" value="ECO:0007669"/>
    <property type="project" value="UniProtKB-UniPathway"/>
</dbReference>
<dbReference type="GO" id="GO:0006741">
    <property type="term" value="P:NADP biosynthetic process"/>
    <property type="evidence" value="ECO:0007669"/>
    <property type="project" value="InterPro"/>
</dbReference>
<dbReference type="Gene3D" id="3.40.50.10330">
    <property type="entry name" value="Probable inorganic polyphosphate/atp-NAD kinase, domain 1"/>
    <property type="match status" value="1"/>
</dbReference>
<dbReference type="InterPro" id="IPR039065">
    <property type="entry name" value="AcoX-like"/>
</dbReference>
<dbReference type="InterPro" id="IPR011391">
    <property type="entry name" value="AcoX_kinase"/>
</dbReference>
<dbReference type="InterPro" id="IPR017438">
    <property type="entry name" value="ATP-NAD_kinase_N"/>
</dbReference>
<dbReference type="InterPro" id="IPR016064">
    <property type="entry name" value="NAD/diacylglycerol_kinase_sf"/>
</dbReference>
<dbReference type="InterPro" id="IPR002504">
    <property type="entry name" value="NADK"/>
</dbReference>
<dbReference type="PANTHER" id="PTHR40697">
    <property type="entry name" value="ACETOIN CATABOLISM PROTEIN X"/>
    <property type="match status" value="1"/>
</dbReference>
<dbReference type="PANTHER" id="PTHR40697:SF3">
    <property type="entry name" value="ACETOIN CATABOLISM PROTEIN X"/>
    <property type="match status" value="1"/>
</dbReference>
<dbReference type="Pfam" id="PF01513">
    <property type="entry name" value="NAD_kinase"/>
    <property type="match status" value="1"/>
</dbReference>
<dbReference type="PIRSF" id="PIRSF018567">
    <property type="entry name" value="AcoX"/>
    <property type="match status" value="1"/>
</dbReference>
<dbReference type="SUPFAM" id="SSF111331">
    <property type="entry name" value="NAD kinase/diacylglycerol kinase-like"/>
    <property type="match status" value="1"/>
</dbReference>
<organism>
    <name type="scientific">Cupriavidus necator (strain ATCC 17699 / DSM 428 / KCTC 22496 / NCIMB 10442 / H16 / Stanier 337)</name>
    <name type="common">Ralstonia eutropha</name>
    <dbReference type="NCBI Taxonomy" id="381666"/>
    <lineage>
        <taxon>Bacteria</taxon>
        <taxon>Pseudomonadati</taxon>
        <taxon>Pseudomonadota</taxon>
        <taxon>Betaproteobacteria</taxon>
        <taxon>Burkholderiales</taxon>
        <taxon>Burkholderiaceae</taxon>
        <taxon>Cupriavidus</taxon>
    </lineage>
</organism>
<protein>
    <recommendedName>
        <fullName>Acetoin catabolism protein X</fullName>
    </recommendedName>
</protein>
<feature type="chain" id="PRO_0000064438" description="Acetoin catabolism protein X">
    <location>
        <begin position="1"/>
        <end position="359"/>
    </location>
</feature>
<feature type="sequence conflict" description="In Ref. 1; AAA21947." evidence="1" ref="1">
    <original>L</original>
    <variation>V</variation>
    <location>
        <position position="167"/>
    </location>
</feature>